<accession>A0KR69</accession>
<name>AROE_SHESA</name>
<keyword id="KW-0028">Amino-acid biosynthesis</keyword>
<keyword id="KW-0057">Aromatic amino acid biosynthesis</keyword>
<keyword id="KW-0521">NADP</keyword>
<keyword id="KW-0560">Oxidoreductase</keyword>
<gene>
    <name evidence="1" type="primary">aroE</name>
    <name type="ordered locus">Shewana3_0043</name>
</gene>
<reference key="1">
    <citation type="submission" date="2006-09" db="EMBL/GenBank/DDBJ databases">
        <title>Complete sequence of chromosome 1 of Shewanella sp. ANA-3.</title>
        <authorList>
            <person name="Copeland A."/>
            <person name="Lucas S."/>
            <person name="Lapidus A."/>
            <person name="Barry K."/>
            <person name="Detter J.C."/>
            <person name="Glavina del Rio T."/>
            <person name="Hammon N."/>
            <person name="Israni S."/>
            <person name="Dalin E."/>
            <person name="Tice H."/>
            <person name="Pitluck S."/>
            <person name="Chertkov O."/>
            <person name="Brettin T."/>
            <person name="Bruce D."/>
            <person name="Han C."/>
            <person name="Tapia R."/>
            <person name="Gilna P."/>
            <person name="Schmutz J."/>
            <person name="Larimer F."/>
            <person name="Land M."/>
            <person name="Hauser L."/>
            <person name="Kyrpides N."/>
            <person name="Kim E."/>
            <person name="Newman D."/>
            <person name="Salticov C."/>
            <person name="Konstantinidis K."/>
            <person name="Klappenback J."/>
            <person name="Tiedje J."/>
            <person name="Richardson P."/>
        </authorList>
    </citation>
    <scope>NUCLEOTIDE SEQUENCE [LARGE SCALE GENOMIC DNA]</scope>
    <source>
        <strain>ANA-3</strain>
    </source>
</reference>
<comment type="function">
    <text evidence="1">Involved in the biosynthesis of the chorismate, which leads to the biosynthesis of aromatic amino acids. Catalyzes the reversible NADPH linked reduction of 3-dehydroshikimate (DHSA) to yield shikimate (SA).</text>
</comment>
<comment type="catalytic activity">
    <reaction evidence="1">
        <text>shikimate + NADP(+) = 3-dehydroshikimate + NADPH + H(+)</text>
        <dbReference type="Rhea" id="RHEA:17737"/>
        <dbReference type="ChEBI" id="CHEBI:15378"/>
        <dbReference type="ChEBI" id="CHEBI:16630"/>
        <dbReference type="ChEBI" id="CHEBI:36208"/>
        <dbReference type="ChEBI" id="CHEBI:57783"/>
        <dbReference type="ChEBI" id="CHEBI:58349"/>
        <dbReference type="EC" id="1.1.1.25"/>
    </reaction>
</comment>
<comment type="pathway">
    <text evidence="1">Metabolic intermediate biosynthesis; chorismate biosynthesis; chorismate from D-erythrose 4-phosphate and phosphoenolpyruvate: step 4/7.</text>
</comment>
<comment type="subunit">
    <text evidence="1">Homodimer.</text>
</comment>
<comment type="similarity">
    <text evidence="1">Belongs to the shikimate dehydrogenase family.</text>
</comment>
<sequence>MTDMPSVTTPALDRYAVFGNPIGHSKSPFIHGQFASLTQQTLSYEAILAPIDGFEASLRAFFQAGGKGANVTVPFKEQAFALCDSLSAEATLAGAVNTLSLLADGTIYGDNTDGLGLVADLVRHLGSLQHKRVLLVGAGGAARGCILPLLKAEVGQLVITNRTQSKAQALVDIFSQVQEGRYSDKLQAVSMSELSGVFDLVINSTSASLAGELPPLSQSIIGNKTACYDMMYGAKPTAFNQWALQQGAAQVIDGLGMLVGQAAKSFALWRGVEPDTSGVLKLLRDKLQVDAQ</sequence>
<dbReference type="EC" id="1.1.1.25" evidence="1"/>
<dbReference type="EMBL" id="CP000469">
    <property type="protein sequence ID" value="ABK46288.1"/>
    <property type="molecule type" value="Genomic_DNA"/>
</dbReference>
<dbReference type="RefSeq" id="WP_011715333.1">
    <property type="nucleotide sequence ID" value="NC_008577.1"/>
</dbReference>
<dbReference type="SMR" id="A0KR69"/>
<dbReference type="STRING" id="94122.Shewana3_0043"/>
<dbReference type="KEGG" id="shn:Shewana3_0043"/>
<dbReference type="eggNOG" id="COG0169">
    <property type="taxonomic scope" value="Bacteria"/>
</dbReference>
<dbReference type="HOGENOM" id="CLU_044063_2_1_6"/>
<dbReference type="OrthoDB" id="9776868at2"/>
<dbReference type="UniPathway" id="UPA00053">
    <property type="reaction ID" value="UER00087"/>
</dbReference>
<dbReference type="Proteomes" id="UP000002589">
    <property type="component" value="Chromosome"/>
</dbReference>
<dbReference type="GO" id="GO:0005829">
    <property type="term" value="C:cytosol"/>
    <property type="evidence" value="ECO:0007669"/>
    <property type="project" value="TreeGrafter"/>
</dbReference>
<dbReference type="GO" id="GO:0050661">
    <property type="term" value="F:NADP binding"/>
    <property type="evidence" value="ECO:0007669"/>
    <property type="project" value="InterPro"/>
</dbReference>
<dbReference type="GO" id="GO:0004764">
    <property type="term" value="F:shikimate 3-dehydrogenase (NADP+) activity"/>
    <property type="evidence" value="ECO:0007669"/>
    <property type="project" value="UniProtKB-UniRule"/>
</dbReference>
<dbReference type="GO" id="GO:0008652">
    <property type="term" value="P:amino acid biosynthetic process"/>
    <property type="evidence" value="ECO:0007669"/>
    <property type="project" value="UniProtKB-KW"/>
</dbReference>
<dbReference type="GO" id="GO:0009073">
    <property type="term" value="P:aromatic amino acid family biosynthetic process"/>
    <property type="evidence" value="ECO:0007669"/>
    <property type="project" value="UniProtKB-KW"/>
</dbReference>
<dbReference type="GO" id="GO:0009423">
    <property type="term" value="P:chorismate biosynthetic process"/>
    <property type="evidence" value="ECO:0007669"/>
    <property type="project" value="UniProtKB-UniRule"/>
</dbReference>
<dbReference type="GO" id="GO:0019632">
    <property type="term" value="P:shikimate metabolic process"/>
    <property type="evidence" value="ECO:0007669"/>
    <property type="project" value="InterPro"/>
</dbReference>
<dbReference type="CDD" id="cd01065">
    <property type="entry name" value="NAD_bind_Shikimate_DH"/>
    <property type="match status" value="1"/>
</dbReference>
<dbReference type="FunFam" id="3.40.50.10860:FF:000006">
    <property type="entry name" value="Shikimate dehydrogenase (NADP(+))"/>
    <property type="match status" value="1"/>
</dbReference>
<dbReference type="FunFam" id="3.40.50.720:FF:000104">
    <property type="entry name" value="Shikimate dehydrogenase (NADP(+))"/>
    <property type="match status" value="1"/>
</dbReference>
<dbReference type="Gene3D" id="3.40.50.10860">
    <property type="entry name" value="Leucine Dehydrogenase, chain A, domain 1"/>
    <property type="match status" value="1"/>
</dbReference>
<dbReference type="Gene3D" id="3.40.50.720">
    <property type="entry name" value="NAD(P)-binding Rossmann-like Domain"/>
    <property type="match status" value="1"/>
</dbReference>
<dbReference type="HAMAP" id="MF_00222">
    <property type="entry name" value="Shikimate_DH_AroE"/>
    <property type="match status" value="1"/>
</dbReference>
<dbReference type="InterPro" id="IPR046346">
    <property type="entry name" value="Aminoacid_DH-like_N_sf"/>
</dbReference>
<dbReference type="InterPro" id="IPR036291">
    <property type="entry name" value="NAD(P)-bd_dom_sf"/>
</dbReference>
<dbReference type="InterPro" id="IPR041121">
    <property type="entry name" value="SDH_C"/>
</dbReference>
<dbReference type="InterPro" id="IPR011342">
    <property type="entry name" value="Shikimate_DH"/>
</dbReference>
<dbReference type="InterPro" id="IPR013708">
    <property type="entry name" value="Shikimate_DH-bd_N"/>
</dbReference>
<dbReference type="InterPro" id="IPR022893">
    <property type="entry name" value="Shikimate_DH_fam"/>
</dbReference>
<dbReference type="InterPro" id="IPR006151">
    <property type="entry name" value="Shikm_DH/Glu-tRNA_Rdtase"/>
</dbReference>
<dbReference type="NCBIfam" id="TIGR00507">
    <property type="entry name" value="aroE"/>
    <property type="match status" value="1"/>
</dbReference>
<dbReference type="NCBIfam" id="NF001310">
    <property type="entry name" value="PRK00258.1-2"/>
    <property type="match status" value="1"/>
</dbReference>
<dbReference type="PANTHER" id="PTHR21089:SF1">
    <property type="entry name" value="BIFUNCTIONAL 3-DEHYDROQUINATE DEHYDRATASE_SHIKIMATE DEHYDROGENASE, CHLOROPLASTIC"/>
    <property type="match status" value="1"/>
</dbReference>
<dbReference type="PANTHER" id="PTHR21089">
    <property type="entry name" value="SHIKIMATE DEHYDROGENASE"/>
    <property type="match status" value="1"/>
</dbReference>
<dbReference type="Pfam" id="PF18317">
    <property type="entry name" value="SDH_C"/>
    <property type="match status" value="1"/>
</dbReference>
<dbReference type="Pfam" id="PF01488">
    <property type="entry name" value="Shikimate_DH"/>
    <property type="match status" value="1"/>
</dbReference>
<dbReference type="Pfam" id="PF08501">
    <property type="entry name" value="Shikimate_dh_N"/>
    <property type="match status" value="1"/>
</dbReference>
<dbReference type="SUPFAM" id="SSF53223">
    <property type="entry name" value="Aminoacid dehydrogenase-like, N-terminal domain"/>
    <property type="match status" value="1"/>
</dbReference>
<dbReference type="SUPFAM" id="SSF51735">
    <property type="entry name" value="NAD(P)-binding Rossmann-fold domains"/>
    <property type="match status" value="1"/>
</dbReference>
<protein>
    <recommendedName>
        <fullName evidence="1">Shikimate dehydrogenase (NADP(+))</fullName>
        <shortName evidence="1">SDH</shortName>
        <ecNumber evidence="1">1.1.1.25</ecNumber>
    </recommendedName>
</protein>
<feature type="chain" id="PRO_0000325168" description="Shikimate dehydrogenase (NADP(+))">
    <location>
        <begin position="1"/>
        <end position="292"/>
    </location>
</feature>
<feature type="active site" description="Proton acceptor" evidence="1">
    <location>
        <position position="76"/>
    </location>
</feature>
<feature type="binding site" evidence="1">
    <location>
        <begin position="25"/>
        <end position="27"/>
    </location>
    <ligand>
        <name>shikimate</name>
        <dbReference type="ChEBI" id="CHEBI:36208"/>
    </ligand>
</feature>
<feature type="binding site" evidence="1">
    <location>
        <position position="72"/>
    </location>
    <ligand>
        <name>shikimate</name>
        <dbReference type="ChEBI" id="CHEBI:36208"/>
    </ligand>
</feature>
<feature type="binding site" evidence="1">
    <location>
        <position position="97"/>
    </location>
    <ligand>
        <name>shikimate</name>
        <dbReference type="ChEBI" id="CHEBI:36208"/>
    </ligand>
</feature>
<feature type="binding site" evidence="1">
    <location>
        <position position="113"/>
    </location>
    <ligand>
        <name>shikimate</name>
        <dbReference type="ChEBI" id="CHEBI:36208"/>
    </ligand>
</feature>
<feature type="binding site" evidence="1">
    <location>
        <begin position="137"/>
        <end position="141"/>
    </location>
    <ligand>
        <name>NADP(+)</name>
        <dbReference type="ChEBI" id="CHEBI:58349"/>
    </ligand>
</feature>
<feature type="binding site" evidence="1">
    <location>
        <begin position="161"/>
        <end position="166"/>
    </location>
    <ligand>
        <name>NADP(+)</name>
        <dbReference type="ChEBI" id="CHEBI:58349"/>
    </ligand>
</feature>
<feature type="binding site" evidence="1">
    <location>
        <position position="230"/>
    </location>
    <ligand>
        <name>NADP(+)</name>
        <dbReference type="ChEBI" id="CHEBI:58349"/>
    </ligand>
</feature>
<feature type="binding site" evidence="1">
    <location>
        <position position="232"/>
    </location>
    <ligand>
        <name>shikimate</name>
        <dbReference type="ChEBI" id="CHEBI:36208"/>
    </ligand>
</feature>
<feature type="binding site" evidence="1">
    <location>
        <position position="254"/>
    </location>
    <ligand>
        <name>NADP(+)</name>
        <dbReference type="ChEBI" id="CHEBI:58349"/>
    </ligand>
</feature>
<evidence type="ECO:0000255" key="1">
    <source>
        <dbReference type="HAMAP-Rule" id="MF_00222"/>
    </source>
</evidence>
<proteinExistence type="inferred from homology"/>
<organism>
    <name type="scientific">Shewanella sp. (strain ANA-3)</name>
    <dbReference type="NCBI Taxonomy" id="94122"/>
    <lineage>
        <taxon>Bacteria</taxon>
        <taxon>Pseudomonadati</taxon>
        <taxon>Pseudomonadota</taxon>
        <taxon>Gammaproteobacteria</taxon>
        <taxon>Alteromonadales</taxon>
        <taxon>Shewanellaceae</taxon>
        <taxon>Shewanella</taxon>
    </lineage>
</organism>